<comment type="catalytic activity">
    <reaction>
        <text>a CDP-1,2-diacyl-sn-glycerol + H2O = a 1,2-diacyl-sn-glycero-3-phosphate + CMP + 2 H(+)</text>
        <dbReference type="Rhea" id="RHEA:15221"/>
        <dbReference type="ChEBI" id="CHEBI:15377"/>
        <dbReference type="ChEBI" id="CHEBI:15378"/>
        <dbReference type="ChEBI" id="CHEBI:58332"/>
        <dbReference type="ChEBI" id="CHEBI:58608"/>
        <dbReference type="ChEBI" id="CHEBI:60377"/>
        <dbReference type="EC" id="3.6.1.26"/>
    </reaction>
</comment>
<comment type="pathway">
    <text>Phospholipid metabolism; CDP-diacylglycerol degradation; phosphatidate from CDP-diacylglycerol: step 1/1.</text>
</comment>
<comment type="subcellular location">
    <subcellularLocation>
        <location evidence="1">Cell inner membrane</location>
        <topology evidence="1">Single-pass membrane protein</topology>
    </subcellularLocation>
</comment>
<comment type="similarity">
    <text evidence="3">Belongs to the Cdh family.</text>
</comment>
<comment type="sequence caution" evidence="3">
    <conflict type="erroneous initiation">
        <sequence resource="EMBL-CDS" id="AAD16181"/>
    </conflict>
</comment>
<accession>Q9Z6C1</accession>
<feature type="chain" id="PRO_0000198576" description="CDP-diacylglycerol pyrophosphatase">
    <location>
        <begin position="1"/>
        <end position="247"/>
    </location>
</feature>
<feature type="transmembrane region" description="Helical" evidence="2">
    <location>
        <begin position="4"/>
        <end position="24"/>
    </location>
</feature>
<evidence type="ECO:0000250" key="1"/>
<evidence type="ECO:0000255" key="2"/>
<evidence type="ECO:0000305" key="3"/>
<proteinExistence type="inferred from homology"/>
<keyword id="KW-0997">Cell inner membrane</keyword>
<keyword id="KW-1003">Cell membrane</keyword>
<keyword id="KW-0378">Hydrolase</keyword>
<keyword id="KW-0444">Lipid biosynthesis</keyword>
<keyword id="KW-0443">Lipid metabolism</keyword>
<keyword id="KW-0472">Membrane</keyword>
<keyword id="KW-0594">Phospholipid biosynthesis</keyword>
<keyword id="KW-1208">Phospholipid metabolism</keyword>
<keyword id="KW-0812">Transmembrane</keyword>
<keyword id="KW-1133">Transmembrane helix</keyword>
<gene>
    <name type="primary">cdh</name>
</gene>
<name>CDH_ENTCL</name>
<sequence>MKKIILLLLIVIALAAGGVYWMKAGNPNALRHIVLDQCVPNQIQNRNPAPCAQVKTDAGYVVFKDRNGPLQYLLMPTYRINGTESPLLTEAHTPNFFWLAWQSRSFMTLKHGSEVPDSAISLTINSPTGRTQNHFHIHISCLRPDVREKLNAAQGEISTQWLPLPGGLEGHEYLARRVTENELVQRSPFMMLAEELPEARDHMGRFALAMAQQSDGSFVLLATERNLLTLNRASAEELQDHQCTILK</sequence>
<protein>
    <recommendedName>
        <fullName>CDP-diacylglycerol pyrophosphatase</fullName>
        <ecNumber>3.6.1.26</ecNumber>
    </recommendedName>
    <alternativeName>
        <fullName>CDP-diacylglycerol phosphatidylhydrolase</fullName>
    </alternativeName>
    <alternativeName>
        <fullName>CDP-diglyceride hydrolase</fullName>
    </alternativeName>
</protein>
<organism>
    <name type="scientific">Enterobacter cloacae</name>
    <dbReference type="NCBI Taxonomy" id="550"/>
    <lineage>
        <taxon>Bacteria</taxon>
        <taxon>Pseudomonadati</taxon>
        <taxon>Pseudomonadota</taxon>
        <taxon>Gammaproteobacteria</taxon>
        <taxon>Enterobacterales</taxon>
        <taxon>Enterobacteriaceae</taxon>
        <taxon>Enterobacter</taxon>
        <taxon>Enterobacter cloacae complex</taxon>
    </lineage>
</organism>
<dbReference type="EC" id="3.6.1.26"/>
<dbReference type="EMBL" id="AF098509">
    <property type="protein sequence ID" value="AAD16181.1"/>
    <property type="status" value="ALT_INIT"/>
    <property type="molecule type" value="Genomic_DNA"/>
</dbReference>
<dbReference type="SMR" id="Q9Z6C1"/>
<dbReference type="eggNOG" id="COG2134">
    <property type="taxonomic scope" value="Bacteria"/>
</dbReference>
<dbReference type="UniPathway" id="UPA00609">
    <property type="reaction ID" value="UER00664"/>
</dbReference>
<dbReference type="GO" id="GO:0005886">
    <property type="term" value="C:plasma membrane"/>
    <property type="evidence" value="ECO:0007669"/>
    <property type="project" value="UniProtKB-SubCell"/>
</dbReference>
<dbReference type="GO" id="GO:0008715">
    <property type="term" value="F:CDP-diacylglycerol diphosphatase activity"/>
    <property type="evidence" value="ECO:0007669"/>
    <property type="project" value="UniProtKB-UniRule"/>
</dbReference>
<dbReference type="GO" id="GO:0046342">
    <property type="term" value="P:CDP-diacylglycerol catabolic process"/>
    <property type="evidence" value="ECO:0007669"/>
    <property type="project" value="UniProtKB-UniRule"/>
</dbReference>
<dbReference type="GO" id="GO:0008654">
    <property type="term" value="P:phospholipid biosynthetic process"/>
    <property type="evidence" value="ECO:0007669"/>
    <property type="project" value="UniProtKB-KW"/>
</dbReference>
<dbReference type="Gene3D" id="3.30.428.30">
    <property type="entry name" value="HIT family - CDH-like"/>
    <property type="match status" value="1"/>
</dbReference>
<dbReference type="HAMAP" id="MF_00319">
    <property type="entry name" value="Cdh"/>
    <property type="match status" value="1"/>
</dbReference>
<dbReference type="InterPro" id="IPR003763">
    <property type="entry name" value="CDP-diacylglyc_Pase"/>
</dbReference>
<dbReference type="InterPro" id="IPR015993">
    <property type="entry name" value="CDP-diacylglyc_Pase_proteobac"/>
</dbReference>
<dbReference type="InterPro" id="IPR036265">
    <property type="entry name" value="HIT-like_sf"/>
</dbReference>
<dbReference type="NCBIfam" id="TIGR00672">
    <property type="entry name" value="cdh"/>
    <property type="match status" value="1"/>
</dbReference>
<dbReference type="NCBIfam" id="NF003986">
    <property type="entry name" value="PRK05471.1-5"/>
    <property type="match status" value="1"/>
</dbReference>
<dbReference type="NCBIfam" id="NF003987">
    <property type="entry name" value="PRK05471.1-6"/>
    <property type="match status" value="1"/>
</dbReference>
<dbReference type="Pfam" id="PF02611">
    <property type="entry name" value="CDH"/>
    <property type="match status" value="1"/>
</dbReference>
<dbReference type="PIRSF" id="PIRSF001273">
    <property type="entry name" value="CDH"/>
    <property type="match status" value="1"/>
</dbReference>
<dbReference type="SUPFAM" id="SSF54197">
    <property type="entry name" value="HIT-like"/>
    <property type="match status" value="1"/>
</dbReference>
<reference key="1">
    <citation type="journal article" date="1999" name="Appl. Environ. Microbiol.">
        <title>Role of pfkA and general carbohydrate catabolism in seed colonization by Enterobacter cloacae.</title>
        <authorList>
            <person name="Roberts D.P."/>
            <person name="Dery P.D."/>
            <person name="Yucel I."/>
            <person name="Buyer J."/>
            <person name="Holtman M.A."/>
            <person name="Kobayashi D.Y."/>
        </authorList>
    </citation>
    <scope>NUCLEOTIDE SEQUENCE [GENOMIC DNA]</scope>
    <source>
        <strain>A-11 / 501R3</strain>
    </source>
</reference>